<organism>
    <name type="scientific">Magnetococcus marinus (strain ATCC BAA-1437 / JCM 17883 / MC-1)</name>
    <dbReference type="NCBI Taxonomy" id="156889"/>
    <lineage>
        <taxon>Bacteria</taxon>
        <taxon>Pseudomonadati</taxon>
        <taxon>Pseudomonadota</taxon>
        <taxon>Alphaproteobacteria</taxon>
        <taxon>Magnetococcales</taxon>
        <taxon>Magnetococcaceae</taxon>
        <taxon>Magnetococcus</taxon>
    </lineage>
</organism>
<keyword id="KW-0963">Cytoplasm</keyword>
<keyword id="KW-0460">Magnesium</keyword>
<keyword id="KW-0479">Metal-binding</keyword>
<keyword id="KW-0548">Nucleotidyltransferase</keyword>
<keyword id="KW-1185">Reference proteome</keyword>
<keyword id="KW-0694">RNA-binding</keyword>
<keyword id="KW-0808">Transferase</keyword>
<gene>
    <name evidence="1" type="primary">pnp</name>
    <name type="ordered locus">Mmc1_3722</name>
</gene>
<reference key="1">
    <citation type="journal article" date="2009" name="Appl. Environ. Microbiol.">
        <title>Complete genome sequence of the chemolithoautotrophic marine magnetotactic coccus strain MC-1.</title>
        <authorList>
            <person name="Schubbe S."/>
            <person name="Williams T.J."/>
            <person name="Xie G."/>
            <person name="Kiss H.E."/>
            <person name="Brettin T.S."/>
            <person name="Martinez D."/>
            <person name="Ross C.A."/>
            <person name="Schuler D."/>
            <person name="Cox B.L."/>
            <person name="Nealson K.H."/>
            <person name="Bazylinski D.A."/>
        </authorList>
    </citation>
    <scope>NUCLEOTIDE SEQUENCE [LARGE SCALE GENOMIC DNA]</scope>
    <source>
        <strain>ATCC BAA-1437 / JCM 17883 / MC-1</strain>
    </source>
</reference>
<accession>A0LE14</accession>
<evidence type="ECO:0000255" key="1">
    <source>
        <dbReference type="HAMAP-Rule" id="MF_01595"/>
    </source>
</evidence>
<protein>
    <recommendedName>
        <fullName evidence="1">Polyribonucleotide nucleotidyltransferase</fullName>
        <ecNumber evidence="1">2.7.7.8</ecNumber>
    </recommendedName>
    <alternativeName>
        <fullName evidence="1">Polynucleotide phosphorylase</fullName>
        <shortName evidence="1">PNPase</shortName>
    </alternativeName>
</protein>
<name>PNP_MAGMM</name>
<comment type="function">
    <text evidence="1">Involved in mRNA degradation. Catalyzes the phosphorolysis of single-stranded polyribonucleotides processively in the 3'- to 5'-direction.</text>
</comment>
<comment type="catalytic activity">
    <reaction evidence="1">
        <text>RNA(n+1) + phosphate = RNA(n) + a ribonucleoside 5'-diphosphate</text>
        <dbReference type="Rhea" id="RHEA:22096"/>
        <dbReference type="Rhea" id="RHEA-COMP:14527"/>
        <dbReference type="Rhea" id="RHEA-COMP:17342"/>
        <dbReference type="ChEBI" id="CHEBI:43474"/>
        <dbReference type="ChEBI" id="CHEBI:57930"/>
        <dbReference type="ChEBI" id="CHEBI:140395"/>
        <dbReference type="EC" id="2.7.7.8"/>
    </reaction>
</comment>
<comment type="cofactor">
    <cofactor evidence="1">
        <name>Mg(2+)</name>
        <dbReference type="ChEBI" id="CHEBI:18420"/>
    </cofactor>
</comment>
<comment type="subcellular location">
    <subcellularLocation>
        <location evidence="1">Cytoplasm</location>
    </subcellularLocation>
</comment>
<comment type="similarity">
    <text evidence="1">Belongs to the polyribonucleotide nucleotidyltransferase family.</text>
</comment>
<proteinExistence type="inferred from homology"/>
<feature type="chain" id="PRO_0000329705" description="Polyribonucleotide nucleotidyltransferase">
    <location>
        <begin position="1"/>
        <end position="701"/>
    </location>
</feature>
<feature type="domain" description="KH" evidence="1">
    <location>
        <begin position="556"/>
        <end position="615"/>
    </location>
</feature>
<feature type="domain" description="S1 motif" evidence="1">
    <location>
        <begin position="625"/>
        <end position="693"/>
    </location>
</feature>
<feature type="binding site" evidence="1">
    <location>
        <position position="489"/>
    </location>
    <ligand>
        <name>Mg(2+)</name>
        <dbReference type="ChEBI" id="CHEBI:18420"/>
    </ligand>
</feature>
<feature type="binding site" evidence="1">
    <location>
        <position position="495"/>
    </location>
    <ligand>
        <name>Mg(2+)</name>
        <dbReference type="ChEBI" id="CHEBI:18420"/>
    </ligand>
</feature>
<dbReference type="EC" id="2.7.7.8" evidence="1"/>
<dbReference type="EMBL" id="CP000471">
    <property type="protein sequence ID" value="ABK46207.1"/>
    <property type="molecule type" value="Genomic_DNA"/>
</dbReference>
<dbReference type="RefSeq" id="WP_011715259.1">
    <property type="nucleotide sequence ID" value="NC_008576.1"/>
</dbReference>
<dbReference type="SMR" id="A0LE14"/>
<dbReference type="STRING" id="156889.Mmc1_3722"/>
<dbReference type="KEGG" id="mgm:Mmc1_3722"/>
<dbReference type="eggNOG" id="COG1185">
    <property type="taxonomic scope" value="Bacteria"/>
</dbReference>
<dbReference type="HOGENOM" id="CLU_004217_2_2_5"/>
<dbReference type="OrthoDB" id="9804305at2"/>
<dbReference type="Proteomes" id="UP000002586">
    <property type="component" value="Chromosome"/>
</dbReference>
<dbReference type="GO" id="GO:0005829">
    <property type="term" value="C:cytosol"/>
    <property type="evidence" value="ECO:0007669"/>
    <property type="project" value="TreeGrafter"/>
</dbReference>
<dbReference type="GO" id="GO:0000175">
    <property type="term" value="F:3'-5'-RNA exonuclease activity"/>
    <property type="evidence" value="ECO:0007669"/>
    <property type="project" value="TreeGrafter"/>
</dbReference>
<dbReference type="GO" id="GO:0000287">
    <property type="term" value="F:magnesium ion binding"/>
    <property type="evidence" value="ECO:0007669"/>
    <property type="project" value="UniProtKB-UniRule"/>
</dbReference>
<dbReference type="GO" id="GO:0004654">
    <property type="term" value="F:polyribonucleotide nucleotidyltransferase activity"/>
    <property type="evidence" value="ECO:0007669"/>
    <property type="project" value="UniProtKB-UniRule"/>
</dbReference>
<dbReference type="GO" id="GO:0003723">
    <property type="term" value="F:RNA binding"/>
    <property type="evidence" value="ECO:0007669"/>
    <property type="project" value="UniProtKB-UniRule"/>
</dbReference>
<dbReference type="GO" id="GO:0006402">
    <property type="term" value="P:mRNA catabolic process"/>
    <property type="evidence" value="ECO:0007669"/>
    <property type="project" value="UniProtKB-UniRule"/>
</dbReference>
<dbReference type="GO" id="GO:0006396">
    <property type="term" value="P:RNA processing"/>
    <property type="evidence" value="ECO:0007669"/>
    <property type="project" value="InterPro"/>
</dbReference>
<dbReference type="CDD" id="cd02393">
    <property type="entry name" value="KH-I_PNPase"/>
    <property type="match status" value="1"/>
</dbReference>
<dbReference type="CDD" id="cd11363">
    <property type="entry name" value="RNase_PH_PNPase_1"/>
    <property type="match status" value="1"/>
</dbReference>
<dbReference type="CDD" id="cd11364">
    <property type="entry name" value="RNase_PH_PNPase_2"/>
    <property type="match status" value="1"/>
</dbReference>
<dbReference type="CDD" id="cd04472">
    <property type="entry name" value="S1_PNPase"/>
    <property type="match status" value="1"/>
</dbReference>
<dbReference type="FunFam" id="2.40.50.140:FF:000023">
    <property type="entry name" value="Polyribonucleotide nucleotidyltransferase"/>
    <property type="match status" value="1"/>
</dbReference>
<dbReference type="FunFam" id="3.30.1370.10:FF:000001">
    <property type="entry name" value="Polyribonucleotide nucleotidyltransferase"/>
    <property type="match status" value="1"/>
</dbReference>
<dbReference type="FunFam" id="3.30.230.70:FF:000001">
    <property type="entry name" value="Polyribonucleotide nucleotidyltransferase"/>
    <property type="match status" value="1"/>
</dbReference>
<dbReference type="FunFam" id="3.30.230.70:FF:000002">
    <property type="entry name" value="Polyribonucleotide nucleotidyltransferase"/>
    <property type="match status" value="1"/>
</dbReference>
<dbReference type="Gene3D" id="3.30.230.70">
    <property type="entry name" value="GHMP Kinase, N-terminal domain"/>
    <property type="match status" value="2"/>
</dbReference>
<dbReference type="Gene3D" id="3.30.1370.10">
    <property type="entry name" value="K Homology domain, type 1"/>
    <property type="match status" value="1"/>
</dbReference>
<dbReference type="Gene3D" id="2.40.50.140">
    <property type="entry name" value="Nucleic acid-binding proteins"/>
    <property type="match status" value="1"/>
</dbReference>
<dbReference type="HAMAP" id="MF_01595">
    <property type="entry name" value="PNPase"/>
    <property type="match status" value="1"/>
</dbReference>
<dbReference type="InterPro" id="IPR001247">
    <property type="entry name" value="ExoRNase_PH_dom1"/>
</dbReference>
<dbReference type="InterPro" id="IPR015847">
    <property type="entry name" value="ExoRNase_PH_dom2"/>
</dbReference>
<dbReference type="InterPro" id="IPR036345">
    <property type="entry name" value="ExoRNase_PH_dom2_sf"/>
</dbReference>
<dbReference type="InterPro" id="IPR004087">
    <property type="entry name" value="KH_dom"/>
</dbReference>
<dbReference type="InterPro" id="IPR004088">
    <property type="entry name" value="KH_dom_type_1"/>
</dbReference>
<dbReference type="InterPro" id="IPR036612">
    <property type="entry name" value="KH_dom_type_1_sf"/>
</dbReference>
<dbReference type="InterPro" id="IPR012340">
    <property type="entry name" value="NA-bd_OB-fold"/>
</dbReference>
<dbReference type="InterPro" id="IPR012162">
    <property type="entry name" value="PNPase"/>
</dbReference>
<dbReference type="InterPro" id="IPR027408">
    <property type="entry name" value="PNPase/RNase_PH_dom_sf"/>
</dbReference>
<dbReference type="InterPro" id="IPR015848">
    <property type="entry name" value="PNPase_PH_RNA-bd_bac/org-type"/>
</dbReference>
<dbReference type="InterPro" id="IPR036456">
    <property type="entry name" value="PNPase_PH_RNA-bd_sf"/>
</dbReference>
<dbReference type="InterPro" id="IPR020568">
    <property type="entry name" value="Ribosomal_Su5_D2-typ_SF"/>
</dbReference>
<dbReference type="InterPro" id="IPR003029">
    <property type="entry name" value="S1_domain"/>
</dbReference>
<dbReference type="NCBIfam" id="TIGR03591">
    <property type="entry name" value="polynuc_phos"/>
    <property type="match status" value="1"/>
</dbReference>
<dbReference type="NCBIfam" id="NF008805">
    <property type="entry name" value="PRK11824.1"/>
    <property type="match status" value="1"/>
</dbReference>
<dbReference type="PANTHER" id="PTHR11252">
    <property type="entry name" value="POLYRIBONUCLEOTIDE NUCLEOTIDYLTRANSFERASE"/>
    <property type="match status" value="1"/>
</dbReference>
<dbReference type="PANTHER" id="PTHR11252:SF0">
    <property type="entry name" value="POLYRIBONUCLEOTIDE NUCLEOTIDYLTRANSFERASE 1, MITOCHONDRIAL"/>
    <property type="match status" value="1"/>
</dbReference>
<dbReference type="Pfam" id="PF00013">
    <property type="entry name" value="KH_1"/>
    <property type="match status" value="1"/>
</dbReference>
<dbReference type="Pfam" id="PF03726">
    <property type="entry name" value="PNPase"/>
    <property type="match status" value="1"/>
</dbReference>
<dbReference type="Pfam" id="PF01138">
    <property type="entry name" value="RNase_PH"/>
    <property type="match status" value="2"/>
</dbReference>
<dbReference type="Pfam" id="PF03725">
    <property type="entry name" value="RNase_PH_C"/>
    <property type="match status" value="2"/>
</dbReference>
<dbReference type="Pfam" id="PF00575">
    <property type="entry name" value="S1"/>
    <property type="match status" value="1"/>
</dbReference>
<dbReference type="PIRSF" id="PIRSF005499">
    <property type="entry name" value="PNPase"/>
    <property type="match status" value="1"/>
</dbReference>
<dbReference type="SMART" id="SM00322">
    <property type="entry name" value="KH"/>
    <property type="match status" value="1"/>
</dbReference>
<dbReference type="SMART" id="SM00316">
    <property type="entry name" value="S1"/>
    <property type="match status" value="1"/>
</dbReference>
<dbReference type="SUPFAM" id="SSF54791">
    <property type="entry name" value="Eukaryotic type KH-domain (KH-domain type I)"/>
    <property type="match status" value="1"/>
</dbReference>
<dbReference type="SUPFAM" id="SSF50249">
    <property type="entry name" value="Nucleic acid-binding proteins"/>
    <property type="match status" value="1"/>
</dbReference>
<dbReference type="SUPFAM" id="SSF46915">
    <property type="entry name" value="Polynucleotide phosphorylase/guanosine pentaphosphate synthase (PNPase/GPSI), domain 3"/>
    <property type="match status" value="1"/>
</dbReference>
<dbReference type="SUPFAM" id="SSF55666">
    <property type="entry name" value="Ribonuclease PH domain 2-like"/>
    <property type="match status" value="2"/>
</dbReference>
<dbReference type="SUPFAM" id="SSF54211">
    <property type="entry name" value="Ribosomal protein S5 domain 2-like"/>
    <property type="match status" value="2"/>
</dbReference>
<dbReference type="PROSITE" id="PS50084">
    <property type="entry name" value="KH_TYPE_1"/>
    <property type="match status" value="1"/>
</dbReference>
<dbReference type="PROSITE" id="PS50126">
    <property type="entry name" value="S1"/>
    <property type="match status" value="1"/>
</dbReference>
<sequence length="701" mass="75828">MFNIHTKSVQFGEKTITLETGRVARQANGAVMVTYGDTVVLVTAVAETSMRAGQDFFPLSVHYQEKFWAAGKIPGGFIKRETRPSEREVLTSRLIDRPIRPLFPKGFMNETQVVAQVLSYDPDYPSDIAALIGCSAALALSGVPFEGPIGGARVGFIDGKPVLNPTVDQLAASRLDLVVAGTRSAVTMVESEVDFLSEDEMLDCVMFAHESFQPVITAIEELVAEAGKPRWVVEPVQVNEALLAEMNDKFAAQVTEAYAIPEKMARYEAVAQVKAAAMEALGTIEVDGQSVKRSEEVASLFKKIESRTLRQNVLQGKRVDGRGLTDIRPIACEVSILPRVHGTALFTRGETQAIATVTLGTSRDEQIVETLSGEYRDRFYLNYTFPPYCVGETGRMGAPGRREIGHGKLATRALTAIVPSAEVFPYTLRITSEITESNGSSSMATVCGAVLAMQDAGVPIKAPVAGIAMGLVKEGDAYAVLSDILGDEDHLGDMDFKVAGNADGITALQMDIKITGITREIMAKALEQARAGRLHILGEMGKAMTTHRAEMSAYAPRIHTMKIHPDKIREVIGSGGKVIRSITEETGCAIDIEDDGTIRIASSDQASAEQAVKIIKSIVAEVEKGQVYEGKVVRITDFGAFVNILPNKDGLVHISQLANRRVQNVTDVVKEGDVVTVKVLDVDRQGRVKLTMKEMEEGAAE</sequence>